<comment type="catalytic activity">
    <reaction evidence="1">
        <text>(S)-malate + a quinone = a quinol + oxaloacetate</text>
        <dbReference type="Rhea" id="RHEA:46012"/>
        <dbReference type="ChEBI" id="CHEBI:15589"/>
        <dbReference type="ChEBI" id="CHEBI:16452"/>
        <dbReference type="ChEBI" id="CHEBI:24646"/>
        <dbReference type="ChEBI" id="CHEBI:132124"/>
        <dbReference type="EC" id="1.1.5.4"/>
    </reaction>
</comment>
<comment type="cofactor">
    <cofactor evidence="1">
        <name>FAD</name>
        <dbReference type="ChEBI" id="CHEBI:57692"/>
    </cofactor>
</comment>
<comment type="pathway">
    <text evidence="1">Carbohydrate metabolism; tricarboxylic acid cycle; oxaloacetate from (S)-malate (quinone route): step 1/1.</text>
</comment>
<comment type="similarity">
    <text evidence="1">Belongs to the MQO family.</text>
</comment>
<organism>
    <name type="scientific">Blochmanniella floridana</name>
    <dbReference type="NCBI Taxonomy" id="203907"/>
    <lineage>
        <taxon>Bacteria</taxon>
        <taxon>Pseudomonadati</taxon>
        <taxon>Pseudomonadota</taxon>
        <taxon>Gammaproteobacteria</taxon>
        <taxon>Enterobacterales</taxon>
        <taxon>Enterobacteriaceae</taxon>
        <taxon>ant endosymbionts</taxon>
        <taxon>Candidatus Blochmanniella</taxon>
    </lineage>
</organism>
<gene>
    <name evidence="1" type="primary">mqo</name>
    <name type="ordered locus">Bfl529</name>
</gene>
<accession>Q7VRS0</accession>
<keyword id="KW-0274">FAD</keyword>
<keyword id="KW-0285">Flavoprotein</keyword>
<keyword id="KW-0560">Oxidoreductase</keyword>
<keyword id="KW-1185">Reference proteome</keyword>
<keyword id="KW-0816">Tricarboxylic acid cycle</keyword>
<proteinExistence type="inferred from homology"/>
<sequence length="524" mass="59985">MKNSIFKNKYNSTQYNLNSSVDIVLVGAGIMSVTLGSFLTILEPSWIIHIYERLNKPAQESSNSWNNAGTGHAAFCELNYTKYNKINDSIDITKALSINTAFELSLQFWAFLTKNGIINNPKSFINNIPHISFVWGQKNINFLKKRFQTLQTHNLFHGMIYSEDPHQIKSWIPLVMTGRNNNQKVAATYMPMGTDINFEEITTQLLAQLKKNPNFNIYLEHDVTHIERHNNKYWKISVQDIQHKKTIHTYTKYVFIGAGGKSLNLLQTANIQSVSGYAGFPVGGQFLVTYNPEIVSQHQAKVYGKANVSMPPMSVPHIDTRILNNKKVLLFGPFATFSSKFLKYGSWLDLFHSLNKHNLKPIIQAGIDNFPLIKYLFNQLIMSNHDRINALKEYYPEVNSKDWFLIQAGQRVQIIKKNNKNRGILQFGTEIVSSADGSLSALLGASPGASISVSITIKLLNIMFQNKYYNDLWKTKLIEIVPSYINPTLNNYHSDFMKQIRKNTRNILKLIYIEKENRSLIFKK</sequence>
<name>MQO_BLOFL</name>
<evidence type="ECO:0000255" key="1">
    <source>
        <dbReference type="HAMAP-Rule" id="MF_00212"/>
    </source>
</evidence>
<feature type="chain" id="PRO_0000128709" description="Probable malate:quinone oxidoreductase">
    <location>
        <begin position="1"/>
        <end position="524"/>
    </location>
</feature>
<dbReference type="EC" id="1.1.5.4" evidence="1"/>
<dbReference type="EMBL" id="BX248583">
    <property type="protein sequence ID" value="CAD83215.1"/>
    <property type="molecule type" value="Genomic_DNA"/>
</dbReference>
<dbReference type="SMR" id="Q7VRS0"/>
<dbReference type="STRING" id="203907.Bfl529"/>
<dbReference type="KEGG" id="bfl:Bfl529"/>
<dbReference type="eggNOG" id="COG0579">
    <property type="taxonomic scope" value="Bacteria"/>
</dbReference>
<dbReference type="HOGENOM" id="CLU_028151_0_0_6"/>
<dbReference type="OrthoDB" id="9763983at2"/>
<dbReference type="UniPathway" id="UPA00223">
    <property type="reaction ID" value="UER01008"/>
</dbReference>
<dbReference type="Proteomes" id="UP000002192">
    <property type="component" value="Chromosome"/>
</dbReference>
<dbReference type="GO" id="GO:0047545">
    <property type="term" value="F:2-hydroxyglutarate dehydrogenase activity"/>
    <property type="evidence" value="ECO:0007669"/>
    <property type="project" value="TreeGrafter"/>
</dbReference>
<dbReference type="GO" id="GO:0008924">
    <property type="term" value="F:L-malate dehydrogenase (quinone) activity"/>
    <property type="evidence" value="ECO:0007669"/>
    <property type="project" value="UniProtKB-UniRule"/>
</dbReference>
<dbReference type="GO" id="GO:0006099">
    <property type="term" value="P:tricarboxylic acid cycle"/>
    <property type="evidence" value="ECO:0007669"/>
    <property type="project" value="UniProtKB-UniRule"/>
</dbReference>
<dbReference type="HAMAP" id="MF_00212">
    <property type="entry name" value="MQO"/>
    <property type="match status" value="1"/>
</dbReference>
<dbReference type="InterPro" id="IPR036188">
    <property type="entry name" value="FAD/NAD-bd_sf"/>
</dbReference>
<dbReference type="InterPro" id="IPR006231">
    <property type="entry name" value="MQO"/>
</dbReference>
<dbReference type="NCBIfam" id="TIGR01320">
    <property type="entry name" value="mal_quin_oxido"/>
    <property type="match status" value="1"/>
</dbReference>
<dbReference type="NCBIfam" id="NF003603">
    <property type="entry name" value="PRK05257.1-1"/>
    <property type="match status" value="1"/>
</dbReference>
<dbReference type="NCBIfam" id="NF003605">
    <property type="entry name" value="PRK05257.1-4"/>
    <property type="match status" value="1"/>
</dbReference>
<dbReference type="NCBIfam" id="NF003606">
    <property type="entry name" value="PRK05257.2-1"/>
    <property type="match status" value="1"/>
</dbReference>
<dbReference type="NCBIfam" id="NF003611">
    <property type="entry name" value="PRK05257.3-2"/>
    <property type="match status" value="1"/>
</dbReference>
<dbReference type="NCBIfam" id="NF009875">
    <property type="entry name" value="PRK13339.1"/>
    <property type="match status" value="1"/>
</dbReference>
<dbReference type="PANTHER" id="PTHR43104">
    <property type="entry name" value="L-2-HYDROXYGLUTARATE DEHYDROGENASE, MITOCHONDRIAL"/>
    <property type="match status" value="1"/>
</dbReference>
<dbReference type="PANTHER" id="PTHR43104:SF2">
    <property type="entry name" value="L-2-HYDROXYGLUTARATE DEHYDROGENASE, MITOCHONDRIAL"/>
    <property type="match status" value="1"/>
</dbReference>
<dbReference type="Pfam" id="PF06039">
    <property type="entry name" value="Mqo"/>
    <property type="match status" value="1"/>
</dbReference>
<dbReference type="SUPFAM" id="SSF51905">
    <property type="entry name" value="FAD/NAD(P)-binding domain"/>
    <property type="match status" value="1"/>
</dbReference>
<protein>
    <recommendedName>
        <fullName evidence="1">Probable malate:quinone oxidoreductase</fullName>
        <ecNumber evidence="1">1.1.5.4</ecNumber>
    </recommendedName>
    <alternativeName>
        <fullName evidence="1">MQO</fullName>
    </alternativeName>
    <alternativeName>
        <fullName evidence="1">Malate dehydrogenase [quinone]</fullName>
    </alternativeName>
</protein>
<reference key="1">
    <citation type="journal article" date="2003" name="Proc. Natl. Acad. Sci. U.S.A.">
        <title>The genome sequence of Blochmannia floridanus: comparative analysis of reduced genomes.</title>
        <authorList>
            <person name="Gil R."/>
            <person name="Silva F.J."/>
            <person name="Zientz E."/>
            <person name="Delmotte F."/>
            <person name="Gonzalez-Candelas F."/>
            <person name="Latorre A."/>
            <person name="Rausell C."/>
            <person name="Kamerbeek J."/>
            <person name="Gadau J."/>
            <person name="Hoelldobler B."/>
            <person name="van Ham R.C.H.J."/>
            <person name="Gross R."/>
            <person name="Moya A."/>
        </authorList>
    </citation>
    <scope>NUCLEOTIDE SEQUENCE [LARGE SCALE GENOMIC DNA]</scope>
</reference>